<accession>P0CK00</accession>
<organism>
    <name type="scientific">Peanut mottle virus (strain M)</name>
    <dbReference type="NCBI Taxonomy" id="103926"/>
    <lineage>
        <taxon>Viruses</taxon>
        <taxon>Riboviria</taxon>
        <taxon>Orthornavirae</taxon>
        <taxon>Pisuviricota</taxon>
        <taxon>Stelpaviricetes</taxon>
        <taxon>Patatavirales</taxon>
        <taxon>Potyviridae</taxon>
        <taxon>Potyvirus</taxon>
        <taxon>Peanut mottle virus</taxon>
    </lineage>
</organism>
<keyword id="KW-1031">Host cell junction</keyword>
<keyword id="KW-0945">Host-virus interaction</keyword>
<keyword id="KW-0378">Hydrolase</keyword>
<keyword id="KW-1090">Inhibition of host innate immune response by virus</keyword>
<keyword id="KW-0645">Protease</keyword>
<keyword id="KW-0688">Ribosomal frameshifting</keyword>
<keyword id="KW-0720">Serine protease</keyword>
<keyword id="KW-0941">Suppressor of RNA silencing</keyword>
<keyword id="KW-0813">Transport</keyword>
<keyword id="KW-0899">Viral immunoevasion</keyword>
<keyword id="KW-0916">Viral movement protein</keyword>
<feature type="chain" id="PRO_0000420066" description="P3N-PIPO polyprotein">
    <location>
        <begin position="1"/>
        <end position="1008"/>
    </location>
</feature>
<feature type="chain" id="PRO_0000420067" description="P1 protease" evidence="4">
    <location>
        <begin position="1"/>
        <end position="322"/>
    </location>
</feature>
<feature type="chain" id="PRO_0000420068" description="Helper component proteinase" evidence="4">
    <location>
        <begin position="323"/>
        <end position="779"/>
    </location>
</feature>
<feature type="chain" id="PRO_0000408544" description="Movement protein P3N-PIPO">
    <location>
        <begin position="780"/>
        <end position="1008"/>
    </location>
</feature>
<feature type="domain" description="Peptidase S30" evidence="6">
    <location>
        <begin position="180"/>
        <end position="322"/>
    </location>
</feature>
<feature type="domain" description="Peptidase C6" evidence="5">
    <location>
        <begin position="657"/>
        <end position="779"/>
    </location>
</feature>
<feature type="short sequence motif" description="Involved in interaction with stylet and aphid transmission" evidence="1">
    <location>
        <begin position="374"/>
        <end position="377"/>
    </location>
</feature>
<feature type="short sequence motif" description="Involved in virions binding and aphid transmission" evidence="1">
    <location>
        <begin position="631"/>
        <end position="633"/>
    </location>
</feature>
<feature type="active site" description="For P1 proteinase activity" evidence="6">
    <location>
        <position position="233"/>
    </location>
</feature>
<feature type="active site" description="For P1 proteinase activity" evidence="6">
    <location>
        <position position="242"/>
    </location>
</feature>
<feature type="active site" description="For P1 proteinase activity" evidence="6">
    <location>
        <position position="275"/>
    </location>
</feature>
<feature type="active site" description="For helper component proteinase activity" evidence="5">
    <location>
        <position position="665"/>
    </location>
</feature>
<feature type="active site" description="For helper component proteinase activity" evidence="5">
    <location>
        <position position="738"/>
    </location>
</feature>
<feature type="site" description="Cleavage; by P1 proteinase" evidence="6">
    <location>
        <begin position="322"/>
        <end position="323"/>
    </location>
</feature>
<feature type="site" description="Cleavage; by autolysis" evidence="5">
    <location>
        <begin position="779"/>
        <end position="780"/>
    </location>
</feature>
<feature type="unsure residue">
    <location>
        <begin position="932"/>
        <end position="938"/>
    </location>
</feature>
<name>MVP_PEMVM</name>
<evidence type="ECO:0000250" key="1"/>
<evidence type="ECO:0000250" key="2">
    <source>
        <dbReference type="UniProtKB" id="P04517"/>
    </source>
</evidence>
<evidence type="ECO:0000250" key="3">
    <source>
        <dbReference type="UniProtKB" id="P0CK11"/>
    </source>
</evidence>
<evidence type="ECO:0000255" key="4"/>
<evidence type="ECO:0000255" key="5">
    <source>
        <dbReference type="PROSITE-ProRule" id="PRU01080"/>
    </source>
</evidence>
<evidence type="ECO:0000255" key="6">
    <source>
        <dbReference type="PROSITE-ProRule" id="PRU01219"/>
    </source>
</evidence>
<evidence type="ECO:0000305" key="7"/>
<organismHost>
    <name type="scientific">Arachis hypogaea</name>
    <name type="common">Peanut</name>
    <dbReference type="NCBI Taxonomy" id="3818"/>
</organismHost>
<organismHost>
    <name type="scientific">Arachis pintoi</name>
    <dbReference type="NCBI Taxonomy" id="108216"/>
</organismHost>
<organismHost>
    <name type="scientific">Cassia</name>
    <dbReference type="NCBI Taxonomy" id="53851"/>
</organismHost>
<organismHost>
    <name type="scientific">Glycine max</name>
    <name type="common">Soybean</name>
    <name type="synonym">Glycine hispida</name>
    <dbReference type="NCBI Taxonomy" id="3847"/>
</organismHost>
<organismHost>
    <name type="scientific">Phaseolus vulgaris</name>
    <name type="common">Kidney bean</name>
    <name type="synonym">French bean</name>
    <dbReference type="NCBI Taxonomy" id="3885"/>
</organismHost>
<organismHost>
    <name type="scientific">Pisum sativum</name>
    <name type="common">Garden pea</name>
    <name type="synonym">Lathyrus oleraceus</name>
    <dbReference type="NCBI Taxonomy" id="3888"/>
</organismHost>
<organismHost>
    <name type="scientific">Stylosanthes</name>
    <dbReference type="NCBI Taxonomy" id="35627"/>
</organismHost>
<reference key="1">
    <citation type="submission" date="1997-09" db="EMBL/GenBank/DDBJ databases">
        <title>The complete nucleotide sequence of peanut mottle virus (M strain) genomic RNA.</title>
        <authorList>
            <person name="Flasinski S."/>
            <person name="Gonzales R.A."/>
            <person name="Cassidy B.G."/>
        </authorList>
    </citation>
    <scope>NUCLEOTIDE SEQUENCE [GENOMIC RNA]</scope>
</reference>
<dbReference type="EC" id="3.4.21.-"/>
<dbReference type="EC" id="3.4.22.45"/>
<dbReference type="EMBL" id="AF023848">
    <property type="status" value="NOT_ANNOTATED_CDS"/>
    <property type="molecule type" value="Genomic_RNA"/>
</dbReference>
<dbReference type="SMR" id="P0CK00"/>
<dbReference type="Proteomes" id="UP000000471">
    <property type="component" value="Segment"/>
</dbReference>
<dbReference type="GO" id="GO:0044219">
    <property type="term" value="C:host cell plasmodesma"/>
    <property type="evidence" value="ECO:0007669"/>
    <property type="project" value="UniProtKB-SubCell"/>
</dbReference>
<dbReference type="GO" id="GO:0004197">
    <property type="term" value="F:cysteine-type endopeptidase activity"/>
    <property type="evidence" value="ECO:0007669"/>
    <property type="project" value="InterPro"/>
</dbReference>
<dbReference type="GO" id="GO:0008236">
    <property type="term" value="F:serine-type peptidase activity"/>
    <property type="evidence" value="ECO:0007669"/>
    <property type="project" value="UniProtKB-KW"/>
</dbReference>
<dbReference type="GO" id="GO:0006508">
    <property type="term" value="P:proteolysis"/>
    <property type="evidence" value="ECO:0007669"/>
    <property type="project" value="UniProtKB-KW"/>
</dbReference>
<dbReference type="GO" id="GO:0052170">
    <property type="term" value="P:symbiont-mediated suppression of host innate immune response"/>
    <property type="evidence" value="ECO:0007669"/>
    <property type="project" value="UniProtKB-KW"/>
</dbReference>
<dbReference type="GO" id="GO:0046740">
    <property type="term" value="P:transport of virus in host, cell to cell"/>
    <property type="evidence" value="ECO:0007669"/>
    <property type="project" value="UniProtKB-KW"/>
</dbReference>
<dbReference type="GO" id="GO:0075523">
    <property type="term" value="P:viral translational frameshifting"/>
    <property type="evidence" value="ECO:0007669"/>
    <property type="project" value="UniProtKB-KW"/>
</dbReference>
<dbReference type="Gene3D" id="3.90.70.150">
    <property type="entry name" value="Helper component proteinase"/>
    <property type="match status" value="1"/>
</dbReference>
<dbReference type="InterPro" id="IPR001456">
    <property type="entry name" value="HC-pro"/>
</dbReference>
<dbReference type="InterPro" id="IPR031159">
    <property type="entry name" value="HC_PRO_CPD_dom"/>
</dbReference>
<dbReference type="InterPro" id="IPR042308">
    <property type="entry name" value="HC_PRO_CPD_sf"/>
</dbReference>
<dbReference type="InterPro" id="IPR002540">
    <property type="entry name" value="Pept_S30_P1_potyvir"/>
</dbReference>
<dbReference type="InterPro" id="IPR039560">
    <property type="entry name" value="Potyvirid-P3"/>
</dbReference>
<dbReference type="Pfam" id="PF00851">
    <property type="entry name" value="Peptidase_C6"/>
    <property type="match status" value="1"/>
</dbReference>
<dbReference type="Pfam" id="PF01577">
    <property type="entry name" value="Peptidase_S30"/>
    <property type="match status" value="1"/>
</dbReference>
<dbReference type="Pfam" id="PF13608">
    <property type="entry name" value="Potyvirid-P3"/>
    <property type="match status" value="1"/>
</dbReference>
<dbReference type="PROSITE" id="PS51744">
    <property type="entry name" value="HC_PRO_CPD"/>
    <property type="match status" value="1"/>
</dbReference>
<dbReference type="PROSITE" id="PS51871">
    <property type="entry name" value="PV_P1_PRO"/>
    <property type="match status" value="1"/>
</dbReference>
<sequence length="1008" mass="114275">MASITFGNACTVVFGQVRKEEVTAGPVAVNLNEGTRMVVVPTAAQMATPTPSVSIKIINRWSNKAVSSYERQVEDVFANFFAKKERSDELLTRYYGKVVQKGNKLMVKRAPLHVARVLEKQRLQDIEDEKAFLQYRDAGVHVAGSVKFTDTRSRGQTVSFRTEHYKPTGKIVQKKKAQKQRANADVDHLIDEVMKICSADCKQVEFISMGKRRLTAKFKLFGKSVIPCIHLAHEQGRRLRRELDPRIHEQVIAHLVTGRKVRELIKDDMVTYGWSGAILNKNLFKRTPFRWDEVVIRGRLYGKLVDARSKLSECSKDKIHQYSSFEAQFWKGWKNKFDTLHPHNKDHICEPTINNEKCGEIVATIFQAIHPVIKVSCSTCRERLTKASNEELNEYLATNLACHKATFDDMRQQHATVNTVLNKIEQTSLANPNLKDSMEIVRLLQNLNQTQARQLMKVNNTLLKGNVATSEEFSDATTQLLEVTRWYAKHLSLVDEGSISSFRNKATSKSLINPSLLCDNQLDRNGNFVWGERGRHSKRFFENFFEEVVPGGGYKKYQIRNSPNCTRKLAIGNLIVPMSLERARNALIGESVERLPVTEACVSRVNGAFMHVASCVTSDNGSAHFSPLYSPTKRHLVVGTTGDSKYIDLPATESDKMYVAKEGYCYINIFLAMLVNVNEDSAKDFTKMIRDTIVPMLGTWPSMMDVATACYILTVFHPETKSAELPRILVDHTNKTMHVIDSFGSISTGYHILKAGTVSQLIHFASNELVSEMKHYVVGGEAPHARRMRMEKALIQGIFKPKQLVYLIEEDPYILMMSLVSPTLLINLFNVGGLEVAMKHWIKKEMNIGLIFSMLSSLAQKVSRADLVNEQITMIDANAAQFIETLAGIDVENPMRNELVSALTMMLARSDVDSTLNKTGFTGFSDTLLEMREKNYWRRAQQGMVRAKLVGKIFFNHFLEASAKAYYGTFAKHKATRYRRQVCNLMYLVTWKDQGPIQWSKKCNIRSV</sequence>
<protein>
    <recommendedName>
        <fullName>P3N-PIPO polyprotein</fullName>
    </recommendedName>
    <component>
        <recommendedName>
            <fullName>P1 protease</fullName>
            <ecNumber>3.4.21.-</ecNumber>
        </recommendedName>
        <alternativeName>
            <fullName>N-terminal protein</fullName>
        </alternativeName>
        <alternativeName>
            <fullName>P1 proteinase</fullName>
        </alternativeName>
    </component>
    <component>
        <recommendedName>
            <fullName>Helper component proteinase</fullName>
            <shortName>HC-pro</shortName>
            <ecNumber>3.4.22.45</ecNumber>
        </recommendedName>
    </component>
    <component>
        <recommendedName>
            <fullName>Movement protein P3N-PIPO</fullName>
        </recommendedName>
        <alternativeName>
            <fullName>Pretty interesting potyviridae ORF</fullName>
            <shortName>PIPO</shortName>
        </alternativeName>
    </component>
</protein>
<proteinExistence type="inferred from homology"/>
<comment type="function">
    <molecule>Helper component proteinase</molecule>
    <text evidence="2">Required for aphid transmission and also has proteolytic activity. Only cleaves a Gly-Gly dipeptide at its own C-terminus. Interacts with virions and aphid stylets. Acts as a suppressor of RNA-mediated gene silencing, also known as post-transcriptional gene silencing (PTGS), a mechanism of plant viral defense that limits the accumulation of viral RNAs. May have RNA-binding activity.</text>
</comment>
<comment type="function">
    <molecule>Movement protein P3N-PIPO</molecule>
    <text evidence="3">Allows efficient cell to cell propagation, by bypassing the host cell wall barrier. Transports viral genome to neighboring plant cells directly through plasmosdesmata, without any budding.</text>
</comment>
<comment type="catalytic activity">
    <molecule>Helper component proteinase</molecule>
    <reaction>
        <text>Hydrolyzes a Gly-|-Gly bond at its own C-terminus, commonly in the sequence -Tyr-Xaa-Val-Gly-|-Gly, in the processing of the potyviral polyprotein.</text>
        <dbReference type="EC" id="3.4.22.45"/>
    </reaction>
</comment>
<comment type="subunit">
    <molecule>Movement protein P3N-PIPO</molecule>
    <text evidence="3">Interacts (via PIPO domain) with host PCaP1 protein; this interaction may help to anchor the movement complex to the plasma membrane from which the complex could move to the plasmodesmata.</text>
</comment>
<comment type="subcellular location">
    <molecule>Movement protein P3N-PIPO</molecule>
    <subcellularLocation>
        <location evidence="3">Host cell junction</location>
        <location evidence="3">Host plasmodesma</location>
    </subcellularLocation>
</comment>
<comment type="alternative products">
    <event type="ribosomal frameshifting"/>
    <isoform>
        <id>P0CK00-1</id>
        <name>P3N-PIPO polyprotein</name>
        <sequence type="displayed"/>
    </isoform>
    <isoform>
        <id>O56075-1</id>
        <name>Genome polyprotein</name>
        <sequence type="external"/>
    </isoform>
</comment>
<comment type="domain">
    <text evidence="1">The N-terminus of helper component proteinase is involved in interaction with stylets. The central part is involved in interaction with virions and the C-terminus is involved in cell-to cell movement of the virus (By similarity).</text>
</comment>
<comment type="PTM">
    <text evidence="1">Potyviral RNA is expressed as two polyproteins which undergo post-translational proteolytic processing. Genome polyprotein is processed by NIa-pro, P1 and HC-pro proteinases resulting in the production of at least ten individual proteins. P3N-PIPO is cleaved by P1 and HC-pro proteinases resulting in the production of three individual proteins. The P1 proteinase and the HC-pro cleave only their respective C-termini autocatalytically (By similarity).</text>
</comment>
<comment type="miscellaneous">
    <molecule>Isoform P3N-PIPO polyprotein</molecule>
    <text>Produced by -1 ribosomal frameshifting in P3 ORF.</text>
</comment>
<comment type="similarity">
    <text evidence="7">Belongs to the potyviridae P3N-PIPO polyprotein family.</text>
</comment>